<evidence type="ECO:0000255" key="1"/>
<reference key="1">
    <citation type="journal article" date="2006" name="J. Virol.">
        <title>Genome of invertebrate iridescent virus type 3 (mosquito iridescent virus).</title>
        <authorList>
            <person name="Delhon G."/>
            <person name="Tulman E.R."/>
            <person name="Afonso C.L."/>
            <person name="Lu Z."/>
            <person name="Becnel J.J."/>
            <person name="Moser B.A."/>
            <person name="Kutish G.F."/>
            <person name="Rock D.L."/>
        </authorList>
    </citation>
    <scope>NUCLEOTIDE SEQUENCE [LARGE SCALE GENOMIC DNA]</scope>
</reference>
<organism>
    <name type="scientific">Invertebrate iridescent virus 3</name>
    <name type="common">IIV-3</name>
    <name type="synonym">Mosquito iridescent virus</name>
    <dbReference type="NCBI Taxonomy" id="345201"/>
    <lineage>
        <taxon>Viruses</taxon>
        <taxon>Varidnaviria</taxon>
        <taxon>Bamfordvirae</taxon>
        <taxon>Nucleocytoviricota</taxon>
        <taxon>Megaviricetes</taxon>
        <taxon>Pimascovirales</taxon>
        <taxon>Iridoviridae</taxon>
        <taxon>Betairidovirinae</taxon>
        <taxon>Chloriridovirus</taxon>
    </lineage>
</organism>
<proteinExistence type="inferred from homology"/>
<dbReference type="EMBL" id="DQ643392">
    <property type="protein sequence ID" value="ABF82055.1"/>
    <property type="molecule type" value="Genomic_DNA"/>
</dbReference>
<dbReference type="RefSeq" id="YP_654597.1">
    <property type="nucleotide sequence ID" value="NC_008187.1"/>
</dbReference>
<dbReference type="SMR" id="Q197D5"/>
<dbReference type="KEGG" id="vg:4156275"/>
<dbReference type="Proteomes" id="UP000001358">
    <property type="component" value="Genome"/>
</dbReference>
<sequence>MNYSVIWAITILILGLVLTLAWARQNPTHPINPLVLNYHTKPSPKRHRMVLVVESFASVDALVELVENILSQTIRVASITVVSQRPDHLRQVPLLHQTCTFSRASGLSALFKETSGTLVVFISKEGFHHFQSPTLLETIDQRGVTAEQTLPGIVLRNTDMPGIDLTTVYRQQRLGLGN</sequence>
<organismHost>
    <name type="scientific">Aedes vexans</name>
    <name type="common">Inland floodwater mosquito</name>
    <name type="synonym">Culex vexans</name>
    <dbReference type="NCBI Taxonomy" id="7163"/>
</organismHost>
<organismHost>
    <name type="scientific">Culex territans</name>
    <dbReference type="NCBI Taxonomy" id="42431"/>
</organismHost>
<organismHost>
    <name type="scientific">Culiseta annulata</name>
    <dbReference type="NCBI Taxonomy" id="332058"/>
</organismHost>
<organismHost>
    <name type="scientific">Ochlerotatus sollicitans</name>
    <name type="common">eastern saltmarsh mosquito</name>
    <dbReference type="NCBI Taxonomy" id="310513"/>
</organismHost>
<organismHost>
    <name type="scientific">Ochlerotatus taeniorhynchus</name>
    <name type="common">Black salt marsh mosquito</name>
    <name type="synonym">Aedes taeniorhynchus</name>
    <dbReference type="NCBI Taxonomy" id="329105"/>
</organismHost>
<organismHost>
    <name type="scientific">Psorophora ferox</name>
    <dbReference type="NCBI Taxonomy" id="7183"/>
</organismHost>
<gene>
    <name type="ORF">IIV3-025R</name>
</gene>
<accession>Q197D5</accession>
<name>025R_IIV3</name>
<keyword id="KW-1185">Reference proteome</keyword>
<keyword id="KW-0732">Signal</keyword>
<protein>
    <recommendedName>
        <fullName>Uncharacterized protein 025R</fullName>
    </recommendedName>
</protein>
<feature type="signal peptide" evidence="1">
    <location>
        <begin position="1"/>
        <end position="23"/>
    </location>
</feature>
<feature type="chain" id="PRO_0000377946" description="Uncharacterized protein 025R">
    <location>
        <begin position="24"/>
        <end position="178"/>
    </location>
</feature>